<dbReference type="GO" id="GO:0005576">
    <property type="term" value="C:extracellular region"/>
    <property type="evidence" value="ECO:0007669"/>
    <property type="project" value="UniProtKB-SubCell"/>
</dbReference>
<dbReference type="GO" id="GO:0090729">
    <property type="term" value="F:toxin activity"/>
    <property type="evidence" value="ECO:0007669"/>
    <property type="project" value="UniProtKB-KW"/>
</dbReference>
<sequence>LCEKFKVQRLVELNCVD</sequence>
<reference key="1">
    <citation type="journal article" date="2007" name="Toxicon">
        <title>Identification of insect-selective and mammal-selective toxins from Parabuthus leiosoma venom.</title>
        <authorList>
            <person name="Ochola J.B."/>
            <person name="Lwande W."/>
            <person name="Thiong'o T."/>
            <person name="Rogo L."/>
            <person name="Herrmann R."/>
            <person name="Schepers E."/>
            <person name="Bagine R."/>
            <person name="Mungai P."/>
            <person name="Ndiege I.O."/>
        </authorList>
    </citation>
    <scope>PROTEIN SEQUENCE</scope>
    <scope>FUNCTION</scope>
    <scope>MASS SPECTROMETRY</scope>
    <source>
        <tissue>Venom</tissue>
    </source>
</reference>
<feature type="chain" id="PRO_0000307898" description="Toxin Plt">
    <location>
        <begin position="1"/>
        <end position="17" status="greater than"/>
    </location>
</feature>
<feature type="non-terminal residue">
    <location>
        <position position="17"/>
    </location>
</feature>
<name>SXPLT_PARLS</name>
<keyword id="KW-0903">Direct protein sequencing</keyword>
<keyword id="KW-0964">Secreted</keyword>
<keyword id="KW-0800">Toxin</keyword>
<proteinExistence type="evidence at protein level"/>
<evidence type="ECO:0000269" key="1">
    <source>
    </source>
</evidence>
<organism>
    <name type="scientific">Parabuthus liosoma</name>
    <name type="common">African black tail scorpion</name>
    <name type="synonym">Parabuthus leiosoma</name>
    <dbReference type="NCBI Taxonomy" id="470425"/>
    <lineage>
        <taxon>Eukaryota</taxon>
        <taxon>Metazoa</taxon>
        <taxon>Ecdysozoa</taxon>
        <taxon>Arthropoda</taxon>
        <taxon>Chelicerata</taxon>
        <taxon>Arachnida</taxon>
        <taxon>Scorpiones</taxon>
        <taxon>Buthida</taxon>
        <taxon>Buthoidea</taxon>
        <taxon>Buthidae</taxon>
        <taxon>Parabuthus</taxon>
    </lineage>
</organism>
<accession>P0C5J8</accession>
<protein>
    <recommendedName>
        <fullName>Toxin Plt</fullName>
    </recommendedName>
</protein>
<comment type="function">
    <text evidence="1">Shows moderate insect toxicity coupled with mild effect on mice.</text>
</comment>
<comment type="subcellular location">
    <subcellularLocation>
        <location>Secreted</location>
    </subcellularLocation>
</comment>
<comment type="tissue specificity">
    <text>Expressed by the venom gland.</text>
</comment>
<comment type="mass spectrometry"/>